<feature type="chain" id="PRO_0000256900" description="Chaperonin GroEL">
    <location>
        <begin position="1"/>
        <end position="542"/>
    </location>
</feature>
<feature type="binding site" evidence="1">
    <location>
        <begin position="29"/>
        <end position="32"/>
    </location>
    <ligand>
        <name>ATP</name>
        <dbReference type="ChEBI" id="CHEBI:30616"/>
    </ligand>
</feature>
<feature type="binding site" evidence="1">
    <location>
        <position position="50"/>
    </location>
    <ligand>
        <name>ATP</name>
        <dbReference type="ChEBI" id="CHEBI:30616"/>
    </ligand>
</feature>
<feature type="binding site" evidence="1">
    <location>
        <begin position="86"/>
        <end position="90"/>
    </location>
    <ligand>
        <name>ATP</name>
        <dbReference type="ChEBI" id="CHEBI:30616"/>
    </ligand>
</feature>
<feature type="binding site" evidence="1">
    <location>
        <position position="414"/>
    </location>
    <ligand>
        <name>ATP</name>
        <dbReference type="ChEBI" id="CHEBI:30616"/>
    </ligand>
</feature>
<feature type="binding site" evidence="1">
    <location>
        <position position="494"/>
    </location>
    <ligand>
        <name>ATP</name>
        <dbReference type="ChEBI" id="CHEBI:30616"/>
    </ligand>
</feature>
<reference key="1">
    <citation type="journal article" date="2007" name="Appl. Environ. Microbiol.">
        <title>Genome sequence of the cellulolytic gliding bacterium Cytophaga hutchinsonii.</title>
        <authorList>
            <person name="Xie G."/>
            <person name="Bruce D.C."/>
            <person name="Challacombe J.F."/>
            <person name="Chertkov O."/>
            <person name="Detter J.C."/>
            <person name="Gilna P."/>
            <person name="Han C.S."/>
            <person name="Lucas S."/>
            <person name="Misra M."/>
            <person name="Myers G.L."/>
            <person name="Richardson P."/>
            <person name="Tapia R."/>
            <person name="Thayer N."/>
            <person name="Thompson L.S."/>
            <person name="Brettin T.S."/>
            <person name="Henrissat B."/>
            <person name="Wilson D.B."/>
            <person name="McBride M.J."/>
        </authorList>
    </citation>
    <scope>NUCLEOTIDE SEQUENCE [LARGE SCALE GENOMIC DNA]</scope>
    <source>
        <strain>ATCC 33406 / DSM 1761 / JCM 20678 / CIP 103989 / IAM 12607 / NBRC 15051 / NCIMB 9469 / D465</strain>
    </source>
</reference>
<organism>
    <name type="scientific">Cytophaga hutchinsonii (strain ATCC 33406 / DSM 1761 / CIP 103989 / NBRC 15051 / NCIMB 9469 / D465)</name>
    <dbReference type="NCBI Taxonomy" id="269798"/>
    <lineage>
        <taxon>Bacteria</taxon>
        <taxon>Pseudomonadati</taxon>
        <taxon>Bacteroidota</taxon>
        <taxon>Cytophagia</taxon>
        <taxon>Cytophagales</taxon>
        <taxon>Cytophagaceae</taxon>
        <taxon>Cytophaga</taxon>
    </lineage>
</organism>
<sequence>MAKQILFDRDAREKLKKGVDALADAVKVTLGPKGRNVILDKKFGSPAITKDGVSVAKDIELKDAIENMGAQLVKEVASKTADQAGDGTTTATVLTQAIFNAGLKNVAAGANPMDLKRGIDKAVSAIIADLKVQSKKISNSNEIAQVATISANNDHEIGKMIAHAMDKVGKDGVITVEEAKGTETEVKTVEGMQFDRGYLSPYFVTNTDKMEVELDRPYILIYDKKVSSMKELLPILEQVVQSGRPLLIIAEDVDGEALATLVVNKIRGALKIAAVKAPGFGDRRKAMLEDIAILTGGTVISEESGYKLENATLEYLGTAEKINIDKDNTTVVNGSGLKDNIVARVNQIKSQMENTTSDYDREKLQERLAKLSGGVAIMYIGAATEVEMKEKKDRVDDALHATRAAVEEGIVPGGGVALIRAGAALDNVAFHNEDEKTGIQIIRTAIESPLRAIVYNAGLEGSVIVQKVKEGTGDYGYNAREDRYEAMIAAGIIDPTKVTRLALENAASVASLLLTTECVVADEPEEKSAMPPMGGGGMGGMM</sequence>
<protein>
    <recommendedName>
        <fullName evidence="1">Chaperonin GroEL</fullName>
        <ecNumber evidence="1">5.6.1.7</ecNumber>
    </recommendedName>
    <alternativeName>
        <fullName evidence="1">60 kDa chaperonin</fullName>
    </alternativeName>
    <alternativeName>
        <fullName evidence="1">Chaperonin-60</fullName>
        <shortName evidence="1">Cpn60</shortName>
    </alternativeName>
</protein>
<keyword id="KW-0067">ATP-binding</keyword>
<keyword id="KW-0143">Chaperone</keyword>
<keyword id="KW-0963">Cytoplasm</keyword>
<keyword id="KW-0413">Isomerase</keyword>
<keyword id="KW-0547">Nucleotide-binding</keyword>
<keyword id="KW-1185">Reference proteome</keyword>
<gene>
    <name evidence="1" type="primary">groEL</name>
    <name evidence="1" type="synonym">groL</name>
    <name type="ordered locus">CHU_1828</name>
</gene>
<comment type="function">
    <text evidence="1">Together with its co-chaperonin GroES, plays an essential role in assisting protein folding. The GroEL-GroES system forms a nano-cage that allows encapsulation of the non-native substrate proteins and provides a physical environment optimized to promote and accelerate protein folding.</text>
</comment>
<comment type="catalytic activity">
    <reaction evidence="1">
        <text>ATP + H2O + a folded polypeptide = ADP + phosphate + an unfolded polypeptide.</text>
        <dbReference type="EC" id="5.6.1.7"/>
    </reaction>
</comment>
<comment type="subunit">
    <text evidence="1">Forms a cylinder of 14 subunits composed of two heptameric rings stacked back-to-back. Interacts with the co-chaperonin GroES.</text>
</comment>
<comment type="subcellular location">
    <subcellularLocation>
        <location evidence="1">Cytoplasm</location>
    </subcellularLocation>
</comment>
<comment type="similarity">
    <text evidence="1">Belongs to the chaperonin (HSP60) family.</text>
</comment>
<accession>Q11U19</accession>
<evidence type="ECO:0000255" key="1">
    <source>
        <dbReference type="HAMAP-Rule" id="MF_00600"/>
    </source>
</evidence>
<name>CH60_CYTH3</name>
<dbReference type="EC" id="5.6.1.7" evidence="1"/>
<dbReference type="EMBL" id="CP000383">
    <property type="protein sequence ID" value="ABG59095.1"/>
    <property type="molecule type" value="Genomic_DNA"/>
</dbReference>
<dbReference type="RefSeq" id="WP_011585212.1">
    <property type="nucleotide sequence ID" value="NC_008255.1"/>
</dbReference>
<dbReference type="SMR" id="Q11U19"/>
<dbReference type="STRING" id="269798.CHU_1828"/>
<dbReference type="KEGG" id="chu:CHU_1828"/>
<dbReference type="eggNOG" id="COG0459">
    <property type="taxonomic scope" value="Bacteria"/>
</dbReference>
<dbReference type="HOGENOM" id="CLU_016503_3_0_10"/>
<dbReference type="OrthoDB" id="9766614at2"/>
<dbReference type="Proteomes" id="UP000001822">
    <property type="component" value="Chromosome"/>
</dbReference>
<dbReference type="GO" id="GO:0005737">
    <property type="term" value="C:cytoplasm"/>
    <property type="evidence" value="ECO:0007669"/>
    <property type="project" value="UniProtKB-SubCell"/>
</dbReference>
<dbReference type="GO" id="GO:0005524">
    <property type="term" value="F:ATP binding"/>
    <property type="evidence" value="ECO:0007669"/>
    <property type="project" value="UniProtKB-UniRule"/>
</dbReference>
<dbReference type="GO" id="GO:0140662">
    <property type="term" value="F:ATP-dependent protein folding chaperone"/>
    <property type="evidence" value="ECO:0007669"/>
    <property type="project" value="InterPro"/>
</dbReference>
<dbReference type="GO" id="GO:0016853">
    <property type="term" value="F:isomerase activity"/>
    <property type="evidence" value="ECO:0007669"/>
    <property type="project" value="UniProtKB-KW"/>
</dbReference>
<dbReference type="GO" id="GO:0051082">
    <property type="term" value="F:unfolded protein binding"/>
    <property type="evidence" value="ECO:0007669"/>
    <property type="project" value="UniProtKB-UniRule"/>
</dbReference>
<dbReference type="GO" id="GO:0042026">
    <property type="term" value="P:protein refolding"/>
    <property type="evidence" value="ECO:0007669"/>
    <property type="project" value="UniProtKB-UniRule"/>
</dbReference>
<dbReference type="CDD" id="cd03344">
    <property type="entry name" value="GroEL"/>
    <property type="match status" value="1"/>
</dbReference>
<dbReference type="FunFam" id="1.10.560.10:FF:000001">
    <property type="entry name" value="60 kDa chaperonin"/>
    <property type="match status" value="1"/>
</dbReference>
<dbReference type="FunFam" id="3.50.7.10:FF:000001">
    <property type="entry name" value="60 kDa chaperonin"/>
    <property type="match status" value="1"/>
</dbReference>
<dbReference type="Gene3D" id="3.50.7.10">
    <property type="entry name" value="GroEL"/>
    <property type="match status" value="1"/>
</dbReference>
<dbReference type="Gene3D" id="1.10.560.10">
    <property type="entry name" value="GroEL-like equatorial domain"/>
    <property type="match status" value="1"/>
</dbReference>
<dbReference type="Gene3D" id="3.30.260.10">
    <property type="entry name" value="TCP-1-like chaperonin intermediate domain"/>
    <property type="match status" value="1"/>
</dbReference>
<dbReference type="HAMAP" id="MF_00600">
    <property type="entry name" value="CH60"/>
    <property type="match status" value="1"/>
</dbReference>
<dbReference type="InterPro" id="IPR018370">
    <property type="entry name" value="Chaperonin_Cpn60_CS"/>
</dbReference>
<dbReference type="InterPro" id="IPR001844">
    <property type="entry name" value="Cpn60/GroEL"/>
</dbReference>
<dbReference type="InterPro" id="IPR002423">
    <property type="entry name" value="Cpn60/GroEL/TCP-1"/>
</dbReference>
<dbReference type="InterPro" id="IPR027409">
    <property type="entry name" value="GroEL-like_apical_dom_sf"/>
</dbReference>
<dbReference type="InterPro" id="IPR027413">
    <property type="entry name" value="GROEL-like_equatorial_sf"/>
</dbReference>
<dbReference type="InterPro" id="IPR027410">
    <property type="entry name" value="TCP-1-like_intermed_sf"/>
</dbReference>
<dbReference type="NCBIfam" id="TIGR02348">
    <property type="entry name" value="GroEL"/>
    <property type="match status" value="1"/>
</dbReference>
<dbReference type="NCBIfam" id="NF000592">
    <property type="entry name" value="PRK00013.1"/>
    <property type="match status" value="1"/>
</dbReference>
<dbReference type="NCBIfam" id="NF009487">
    <property type="entry name" value="PRK12849.1"/>
    <property type="match status" value="1"/>
</dbReference>
<dbReference type="NCBIfam" id="NF009488">
    <property type="entry name" value="PRK12850.1"/>
    <property type="match status" value="1"/>
</dbReference>
<dbReference type="NCBIfam" id="NF009489">
    <property type="entry name" value="PRK12851.1"/>
    <property type="match status" value="1"/>
</dbReference>
<dbReference type="PANTHER" id="PTHR45633">
    <property type="entry name" value="60 KDA HEAT SHOCK PROTEIN, MITOCHONDRIAL"/>
    <property type="match status" value="1"/>
</dbReference>
<dbReference type="Pfam" id="PF00118">
    <property type="entry name" value="Cpn60_TCP1"/>
    <property type="match status" value="1"/>
</dbReference>
<dbReference type="PRINTS" id="PR00298">
    <property type="entry name" value="CHAPERONIN60"/>
</dbReference>
<dbReference type="SUPFAM" id="SSF52029">
    <property type="entry name" value="GroEL apical domain-like"/>
    <property type="match status" value="1"/>
</dbReference>
<dbReference type="SUPFAM" id="SSF48592">
    <property type="entry name" value="GroEL equatorial domain-like"/>
    <property type="match status" value="1"/>
</dbReference>
<dbReference type="SUPFAM" id="SSF54849">
    <property type="entry name" value="GroEL-intermediate domain like"/>
    <property type="match status" value="1"/>
</dbReference>
<dbReference type="PROSITE" id="PS00296">
    <property type="entry name" value="CHAPERONINS_CPN60"/>
    <property type="match status" value="1"/>
</dbReference>
<proteinExistence type="inferred from homology"/>